<name>ACCA_HELPY</name>
<evidence type="ECO:0000255" key="1">
    <source>
        <dbReference type="HAMAP-Rule" id="MF_00823"/>
    </source>
</evidence>
<evidence type="ECO:0000255" key="2">
    <source>
        <dbReference type="PROSITE-ProRule" id="PRU01137"/>
    </source>
</evidence>
<reference key="1">
    <citation type="journal article" date="1997" name="Nature">
        <title>The complete genome sequence of the gastric pathogen Helicobacter pylori.</title>
        <authorList>
            <person name="Tomb J.-F."/>
            <person name="White O."/>
            <person name="Kerlavage A.R."/>
            <person name="Clayton R.A."/>
            <person name="Sutton G.G."/>
            <person name="Fleischmann R.D."/>
            <person name="Ketchum K.A."/>
            <person name="Klenk H.-P."/>
            <person name="Gill S.R."/>
            <person name="Dougherty B.A."/>
            <person name="Nelson K.E."/>
            <person name="Quackenbush J."/>
            <person name="Zhou L."/>
            <person name="Kirkness E.F."/>
            <person name="Peterson S.N."/>
            <person name="Loftus B.J."/>
            <person name="Richardson D.L."/>
            <person name="Dodson R.J."/>
            <person name="Khalak H.G."/>
            <person name="Glodek A."/>
            <person name="McKenney K."/>
            <person name="FitzGerald L.M."/>
            <person name="Lee N."/>
            <person name="Adams M.D."/>
            <person name="Hickey E.K."/>
            <person name="Berg D.E."/>
            <person name="Gocayne J.D."/>
            <person name="Utterback T.R."/>
            <person name="Peterson J.D."/>
            <person name="Kelley J.M."/>
            <person name="Cotton M.D."/>
            <person name="Weidman J.F."/>
            <person name="Fujii C."/>
            <person name="Bowman C."/>
            <person name="Watthey L."/>
            <person name="Wallin E."/>
            <person name="Hayes W.S."/>
            <person name="Borodovsky M."/>
            <person name="Karp P.D."/>
            <person name="Smith H.O."/>
            <person name="Fraser C.M."/>
            <person name="Venter J.C."/>
        </authorList>
    </citation>
    <scope>NUCLEOTIDE SEQUENCE [LARGE SCALE GENOMIC DNA]</scope>
    <source>
        <strain>ATCC 700392 / 26695</strain>
    </source>
</reference>
<comment type="function">
    <text evidence="1">Component of the acetyl coenzyme A carboxylase (ACC) complex. First, biotin carboxylase catalyzes the carboxylation of biotin on its carrier protein (BCCP) and then the CO(2) group is transferred by the carboxyltransferase to acetyl-CoA to form malonyl-CoA.</text>
</comment>
<comment type="catalytic activity">
    <reaction evidence="1">
        <text>N(6)-carboxybiotinyl-L-lysyl-[protein] + acetyl-CoA = N(6)-biotinyl-L-lysyl-[protein] + malonyl-CoA</text>
        <dbReference type="Rhea" id="RHEA:54728"/>
        <dbReference type="Rhea" id="RHEA-COMP:10505"/>
        <dbReference type="Rhea" id="RHEA-COMP:10506"/>
        <dbReference type="ChEBI" id="CHEBI:57288"/>
        <dbReference type="ChEBI" id="CHEBI:57384"/>
        <dbReference type="ChEBI" id="CHEBI:83144"/>
        <dbReference type="ChEBI" id="CHEBI:83145"/>
        <dbReference type="EC" id="2.1.3.15"/>
    </reaction>
</comment>
<comment type="pathway">
    <text evidence="1">Lipid metabolism; malonyl-CoA biosynthesis; malonyl-CoA from acetyl-CoA: step 1/1.</text>
</comment>
<comment type="subunit">
    <text evidence="1">Acetyl-CoA carboxylase is a heterohexamer composed of biotin carboxyl carrier protein (AccB), biotin carboxylase (AccC) and two subunits each of ACCase subunit alpha (AccA) and ACCase subunit beta (AccD).</text>
</comment>
<comment type="subcellular location">
    <subcellularLocation>
        <location evidence="1">Cytoplasm</location>
    </subcellularLocation>
</comment>
<comment type="similarity">
    <text evidence="1">Belongs to the AccA family.</text>
</comment>
<organism>
    <name type="scientific">Helicobacter pylori (strain ATCC 700392 / 26695)</name>
    <name type="common">Campylobacter pylori</name>
    <dbReference type="NCBI Taxonomy" id="85962"/>
    <lineage>
        <taxon>Bacteria</taxon>
        <taxon>Pseudomonadati</taxon>
        <taxon>Campylobacterota</taxon>
        <taxon>Epsilonproteobacteria</taxon>
        <taxon>Campylobacterales</taxon>
        <taxon>Helicobacteraceae</taxon>
        <taxon>Helicobacter</taxon>
    </lineage>
</organism>
<feature type="chain" id="PRO_0000146780" description="Acetyl-coenzyme A carboxylase carboxyl transferase subunit alpha">
    <location>
        <begin position="1"/>
        <end position="312"/>
    </location>
</feature>
<feature type="domain" description="CoA carboxyltransferase C-terminal" evidence="2">
    <location>
        <begin position="36"/>
        <end position="286"/>
    </location>
</feature>
<proteinExistence type="inferred from homology"/>
<dbReference type="EC" id="2.1.3.15" evidence="1"/>
<dbReference type="EMBL" id="AE000511">
    <property type="protein sequence ID" value="AAD07624.1"/>
    <property type="molecule type" value="Genomic_DNA"/>
</dbReference>
<dbReference type="PIR" id="E64589">
    <property type="entry name" value="E64589"/>
</dbReference>
<dbReference type="RefSeq" id="NP_207352.1">
    <property type="nucleotide sequence ID" value="NC_000915.1"/>
</dbReference>
<dbReference type="RefSeq" id="WP_000312027.1">
    <property type="nucleotide sequence ID" value="NC_018939.1"/>
</dbReference>
<dbReference type="SMR" id="O25283"/>
<dbReference type="FunCoup" id="O25283">
    <property type="interactions" value="333"/>
</dbReference>
<dbReference type="IntAct" id="O25283">
    <property type="interactions" value="2"/>
</dbReference>
<dbReference type="STRING" id="85962.HP_0557"/>
<dbReference type="PaxDb" id="85962-C694_02875"/>
<dbReference type="EnsemblBacteria" id="AAD07624">
    <property type="protein sequence ID" value="AAD07624"/>
    <property type="gene ID" value="HP_0557"/>
</dbReference>
<dbReference type="KEGG" id="heo:C694_02875"/>
<dbReference type="KEGG" id="hpy:HP_0557"/>
<dbReference type="PATRIC" id="fig|85962.47.peg.602"/>
<dbReference type="eggNOG" id="COG0825">
    <property type="taxonomic scope" value="Bacteria"/>
</dbReference>
<dbReference type="InParanoid" id="O25283"/>
<dbReference type="OrthoDB" id="9808023at2"/>
<dbReference type="PhylomeDB" id="O25283"/>
<dbReference type="UniPathway" id="UPA00655">
    <property type="reaction ID" value="UER00711"/>
</dbReference>
<dbReference type="Proteomes" id="UP000000429">
    <property type="component" value="Chromosome"/>
</dbReference>
<dbReference type="GO" id="GO:0009317">
    <property type="term" value="C:acetyl-CoA carboxylase complex"/>
    <property type="evidence" value="ECO:0007669"/>
    <property type="project" value="InterPro"/>
</dbReference>
<dbReference type="GO" id="GO:0003989">
    <property type="term" value="F:acetyl-CoA carboxylase activity"/>
    <property type="evidence" value="ECO:0007669"/>
    <property type="project" value="InterPro"/>
</dbReference>
<dbReference type="GO" id="GO:0005524">
    <property type="term" value="F:ATP binding"/>
    <property type="evidence" value="ECO:0007669"/>
    <property type="project" value="UniProtKB-KW"/>
</dbReference>
<dbReference type="GO" id="GO:0016743">
    <property type="term" value="F:carboxyl- or carbamoyltransferase activity"/>
    <property type="evidence" value="ECO:0007669"/>
    <property type="project" value="UniProtKB-UniRule"/>
</dbReference>
<dbReference type="GO" id="GO:0006633">
    <property type="term" value="P:fatty acid biosynthetic process"/>
    <property type="evidence" value="ECO:0007669"/>
    <property type="project" value="UniProtKB-KW"/>
</dbReference>
<dbReference type="GO" id="GO:2001295">
    <property type="term" value="P:malonyl-CoA biosynthetic process"/>
    <property type="evidence" value="ECO:0007669"/>
    <property type="project" value="UniProtKB-UniRule"/>
</dbReference>
<dbReference type="Gene3D" id="3.90.226.10">
    <property type="entry name" value="2-enoyl-CoA Hydratase, Chain A, domain 1"/>
    <property type="match status" value="1"/>
</dbReference>
<dbReference type="HAMAP" id="MF_00823">
    <property type="entry name" value="AcetylCoA_CT_alpha"/>
    <property type="match status" value="1"/>
</dbReference>
<dbReference type="InterPro" id="IPR001095">
    <property type="entry name" value="Acetyl_CoA_COase_a_su"/>
</dbReference>
<dbReference type="InterPro" id="IPR029045">
    <property type="entry name" value="ClpP/crotonase-like_dom_sf"/>
</dbReference>
<dbReference type="InterPro" id="IPR011763">
    <property type="entry name" value="COA_CT_C"/>
</dbReference>
<dbReference type="NCBIfam" id="TIGR00513">
    <property type="entry name" value="accA"/>
    <property type="match status" value="1"/>
</dbReference>
<dbReference type="NCBIfam" id="NF041504">
    <property type="entry name" value="AccA_sub"/>
    <property type="match status" value="1"/>
</dbReference>
<dbReference type="NCBIfam" id="NF004344">
    <property type="entry name" value="PRK05724.1"/>
    <property type="match status" value="1"/>
</dbReference>
<dbReference type="PANTHER" id="PTHR42853">
    <property type="entry name" value="ACETYL-COENZYME A CARBOXYLASE CARBOXYL TRANSFERASE SUBUNIT ALPHA"/>
    <property type="match status" value="1"/>
</dbReference>
<dbReference type="PANTHER" id="PTHR42853:SF3">
    <property type="entry name" value="ACETYL-COENZYME A CARBOXYLASE CARBOXYL TRANSFERASE SUBUNIT ALPHA, CHLOROPLASTIC"/>
    <property type="match status" value="1"/>
</dbReference>
<dbReference type="Pfam" id="PF03255">
    <property type="entry name" value="ACCA"/>
    <property type="match status" value="1"/>
</dbReference>
<dbReference type="PRINTS" id="PR01069">
    <property type="entry name" value="ACCCTRFRASEA"/>
</dbReference>
<dbReference type="SUPFAM" id="SSF52096">
    <property type="entry name" value="ClpP/crotonase"/>
    <property type="match status" value="1"/>
</dbReference>
<dbReference type="PROSITE" id="PS50989">
    <property type="entry name" value="COA_CT_CTER"/>
    <property type="match status" value="1"/>
</dbReference>
<protein>
    <recommendedName>
        <fullName evidence="1">Acetyl-coenzyme A carboxylase carboxyl transferase subunit alpha</fullName>
        <shortName evidence="1">ACCase subunit alpha</shortName>
        <shortName evidence="1">Acetyl-CoA carboxylase carboxyltransferase subunit alpha</shortName>
        <ecNumber evidence="1">2.1.3.15</ecNumber>
    </recommendedName>
</protein>
<gene>
    <name evidence="1" type="primary">accA</name>
    <name type="ordered locus">HP_0557</name>
</gene>
<keyword id="KW-0067">ATP-binding</keyword>
<keyword id="KW-0963">Cytoplasm</keyword>
<keyword id="KW-0275">Fatty acid biosynthesis</keyword>
<keyword id="KW-0276">Fatty acid metabolism</keyword>
<keyword id="KW-0444">Lipid biosynthesis</keyword>
<keyword id="KW-0443">Lipid metabolism</keyword>
<keyword id="KW-0547">Nucleotide-binding</keyword>
<keyword id="KW-1185">Reference proteome</keyword>
<keyword id="KW-0808">Transferase</keyword>
<sequence>MAVYLDFENHIKEIQNEIELALIRGDEDAKEILEKRLDKEVKSIYSNLTDFQKLQLARHPDRPYAMDYIDLILKDKYEVFGDRHYNDDKAIVCFVGKIDNVPVVVIGEEKGRGTKNKLLRNFGMPNPCGYRKALKMAKFAEKFNLPILMLVDTAGAYPGIGAEERGQSEAIAKNLQEFASLKVPTISVIIGEGGSGGALAIAVADKLAMMEYSIFSVISPEGCAAILWDDPSKTEVAIKAMKITPRDLKEAGLIDDIILEPSKGAHRDKFSAANTIKEYFLDALRTIQQDPHFLDNRYQKLMSLGSFVESMN</sequence>
<accession>O25283</accession>